<proteinExistence type="evidence at transcript level"/>
<keyword id="KW-0027">Amidation</keyword>
<keyword id="KW-0165">Cleavage on pair of basic residues</keyword>
<keyword id="KW-1015">Disulfide bond</keyword>
<keyword id="KW-0372">Hormone</keyword>
<keyword id="KW-0964">Secreted</keyword>
<keyword id="KW-0732">Signal</keyword>
<accession>Q91166</accession>
<feature type="signal peptide" evidence="1">
    <location>
        <begin position="1"/>
        <end position="20"/>
    </location>
</feature>
<feature type="peptide" id="PRO_0000020558" description="Isotocin">
    <location>
        <begin position="21"/>
        <end position="29"/>
    </location>
</feature>
<feature type="chain" id="PRO_0000020559" description="Neurophysin IT 1">
    <location>
        <begin position="33"/>
        <end position="157"/>
    </location>
</feature>
<feature type="modified residue" description="Glycine amide" evidence="1">
    <location>
        <position position="29"/>
    </location>
</feature>
<feature type="disulfide bond" evidence="2">
    <location>
        <begin position="21"/>
        <end position="26"/>
    </location>
</feature>
<feature type="disulfide bond" evidence="2">
    <location>
        <begin position="42"/>
        <end position="86"/>
    </location>
</feature>
<feature type="disulfide bond" evidence="2">
    <location>
        <begin position="45"/>
        <end position="59"/>
    </location>
</feature>
<feature type="disulfide bond" evidence="2">
    <location>
        <begin position="53"/>
        <end position="76"/>
    </location>
</feature>
<feature type="disulfide bond" evidence="2">
    <location>
        <begin position="60"/>
        <end position="66"/>
    </location>
</feature>
<feature type="disulfide bond" evidence="2">
    <location>
        <begin position="93"/>
        <end position="106"/>
    </location>
</feature>
<feature type="disulfide bond" evidence="2">
    <location>
        <begin position="100"/>
        <end position="118"/>
    </location>
</feature>
<feature type="disulfide bond" evidence="2">
    <location>
        <begin position="107"/>
        <end position="112"/>
    </location>
</feature>
<protein>
    <recommendedName>
        <fullName>Isotocin-neurophysin IT 1</fullName>
    </recommendedName>
    <component>
        <recommendedName>
            <fullName>Isotocin</fullName>
            <shortName>IT</shortName>
        </recommendedName>
    </component>
    <component>
        <recommendedName>
            <fullName>Neurophysin IT 1</fullName>
        </recommendedName>
    </component>
</protein>
<comment type="function">
    <text>Isotocin causes contraction of smooth muscles.</text>
</comment>
<comment type="subcellular location">
    <subcellularLocation>
        <location>Secreted</location>
    </subcellularLocation>
</comment>
<comment type="PTM">
    <text evidence="1">Seven disulfide bonds are present in neurophysin.</text>
</comment>
<comment type="similarity">
    <text evidence="3">Belongs to the vasopressin/oxytocin family.</text>
</comment>
<comment type="sequence caution" evidence="3">
    <conflict type="erroneous initiation">
        <sequence resource="EMBL-CDS" id="BAA01734"/>
    </conflict>
</comment>
<sequence>MFGTSVSALCLLFLLSVCTACYISNCPIGGKRSALAFPSRKCMACGPGDRGRCFGPNICCGEGMGCYVGSPEAAGCVEENYLPSPCEAGGRVCGSEEGRCAAPGICCDVEGCSIDQSCTEEDEAEYISQSVSSSHGHDLLMKLLNMISHTPPHRVHK</sequence>
<evidence type="ECO:0000250" key="1"/>
<evidence type="ECO:0000250" key="2">
    <source>
        <dbReference type="UniProtKB" id="P01175"/>
    </source>
</evidence>
<evidence type="ECO:0000305" key="3"/>
<reference key="1">
    <citation type="journal article" date="1991" name="J. Comp. Physiol. B">
        <title>Cloning and sequence analyses of cDNAs encoding vasotocin and isotocin precursors of chum salmon, Oncorhynchus keta: evolutionary relationships of neurohypophysial hormone precursors.</title>
        <authorList>
            <person name="Hyodo S."/>
            <person name="Kato Y."/>
            <person name="Ono M."/>
            <person name="Urano A."/>
        </authorList>
    </citation>
    <scope>NUCLEOTIDE SEQUENCE [MRNA]</scope>
    <source>
        <strain>Tsugaruishi</strain>
        <tissue>Brain</tissue>
    </source>
</reference>
<name>NEU1_ONCKE</name>
<organism>
    <name type="scientific">Oncorhynchus keta</name>
    <name type="common">Chum salmon</name>
    <name type="synonym">Salmo keta</name>
    <dbReference type="NCBI Taxonomy" id="8018"/>
    <lineage>
        <taxon>Eukaryota</taxon>
        <taxon>Metazoa</taxon>
        <taxon>Chordata</taxon>
        <taxon>Craniata</taxon>
        <taxon>Vertebrata</taxon>
        <taxon>Euteleostomi</taxon>
        <taxon>Actinopterygii</taxon>
        <taxon>Neopterygii</taxon>
        <taxon>Teleostei</taxon>
        <taxon>Protacanthopterygii</taxon>
        <taxon>Salmoniformes</taxon>
        <taxon>Salmonidae</taxon>
        <taxon>Salmoninae</taxon>
        <taxon>Oncorhynchus</taxon>
    </lineage>
</organism>
<dbReference type="EMBL" id="D10940">
    <property type="protein sequence ID" value="BAA01734.1"/>
    <property type="status" value="ALT_INIT"/>
    <property type="molecule type" value="mRNA"/>
</dbReference>
<dbReference type="SMR" id="Q91166"/>
<dbReference type="GO" id="GO:0005615">
    <property type="term" value="C:extracellular space"/>
    <property type="evidence" value="ECO:0007669"/>
    <property type="project" value="TreeGrafter"/>
</dbReference>
<dbReference type="GO" id="GO:0030141">
    <property type="term" value="C:secretory granule"/>
    <property type="evidence" value="ECO:0007669"/>
    <property type="project" value="TreeGrafter"/>
</dbReference>
<dbReference type="GO" id="GO:0005185">
    <property type="term" value="F:neurohypophyseal hormone activity"/>
    <property type="evidence" value="ECO:0007669"/>
    <property type="project" value="InterPro"/>
</dbReference>
<dbReference type="FunFam" id="2.60.9.10:FF:000001">
    <property type="entry name" value="oxytocin-neurophysin 1"/>
    <property type="match status" value="1"/>
</dbReference>
<dbReference type="Gene3D" id="2.60.9.10">
    <property type="entry name" value="Neurohypophysial hormone domain"/>
    <property type="match status" value="1"/>
</dbReference>
<dbReference type="InterPro" id="IPR000981">
    <property type="entry name" value="Neurhyp_horm"/>
</dbReference>
<dbReference type="InterPro" id="IPR036387">
    <property type="entry name" value="Neurhyp_horm_dom_sf"/>
</dbReference>
<dbReference type="InterPro" id="IPR022423">
    <property type="entry name" value="Neurohypophysial_hormone_CS"/>
</dbReference>
<dbReference type="PANTHER" id="PTHR11681:SF5">
    <property type="entry name" value="ISOTOCIN"/>
    <property type="match status" value="1"/>
</dbReference>
<dbReference type="PANTHER" id="PTHR11681">
    <property type="entry name" value="NEUROPHYSIN"/>
    <property type="match status" value="1"/>
</dbReference>
<dbReference type="Pfam" id="PF00184">
    <property type="entry name" value="Hormone_5"/>
    <property type="match status" value="1"/>
</dbReference>
<dbReference type="PIRSF" id="PIRSF001815">
    <property type="entry name" value="Nonapeptide_hormone_precursor"/>
    <property type="match status" value="1"/>
</dbReference>
<dbReference type="PRINTS" id="PR00831">
    <property type="entry name" value="NEUROPHYSIN"/>
</dbReference>
<dbReference type="SMART" id="SM00003">
    <property type="entry name" value="NH"/>
    <property type="match status" value="1"/>
</dbReference>
<dbReference type="SUPFAM" id="SSF49606">
    <property type="entry name" value="Neurophysin II"/>
    <property type="match status" value="1"/>
</dbReference>
<dbReference type="PROSITE" id="PS00264">
    <property type="entry name" value="NEUROHYPOPHYS_HORM"/>
    <property type="match status" value="1"/>
</dbReference>